<accession>P70371</accession>
<accession>Q9CY71</accession>
<organism>
    <name type="scientific">Mus musculus</name>
    <name type="common">Mouse</name>
    <dbReference type="NCBI Taxonomy" id="10090"/>
    <lineage>
        <taxon>Eukaryota</taxon>
        <taxon>Metazoa</taxon>
        <taxon>Chordata</taxon>
        <taxon>Craniata</taxon>
        <taxon>Vertebrata</taxon>
        <taxon>Euteleostomi</taxon>
        <taxon>Mammalia</taxon>
        <taxon>Eutheria</taxon>
        <taxon>Euarchontoglires</taxon>
        <taxon>Glires</taxon>
        <taxon>Rodentia</taxon>
        <taxon>Myomorpha</taxon>
        <taxon>Muroidea</taxon>
        <taxon>Muridae</taxon>
        <taxon>Murinae</taxon>
        <taxon>Mus</taxon>
        <taxon>Mus</taxon>
    </lineage>
</organism>
<proteinExistence type="evidence at protein level"/>
<reference key="1">
    <citation type="journal article" date="1997" name="Hum. Mol. Genet.">
        <title>Comparison of the human and mouse genes encoding the telomeric protein, TRF1: chromosomal localization, expression and conserved protein domains.</title>
        <authorList>
            <person name="Broccoli D."/>
            <person name="Chong L."/>
            <person name="Oelmann S."/>
            <person name="Fernald A.A."/>
            <person name="Marziliano N."/>
            <person name="van Steensel B."/>
            <person name="Kipling D."/>
            <person name="le Beau M.M."/>
            <person name="de Lange T."/>
        </authorList>
    </citation>
    <scope>NUCLEOTIDE SEQUENCE [GENOMIC DNA / MRNA]</scope>
    <source>
        <strain>129/Sv</strain>
        <strain>BALB/cJ</strain>
        <tissue>Brain</tissue>
    </source>
</reference>
<reference key="2">
    <citation type="journal article" date="2004" name="Genome Res.">
        <title>The status, quality, and expansion of the NIH full-length cDNA project: the Mammalian Gene Collection (MGC).</title>
        <authorList>
            <consortium name="The MGC Project Team"/>
        </authorList>
    </citation>
    <scope>NUCLEOTIDE SEQUENCE [LARGE SCALE MRNA]</scope>
    <source>
        <strain>C57BL/6J</strain>
        <tissue>Thymus</tissue>
    </source>
</reference>
<reference key="3">
    <citation type="journal article" date="2005" name="Science">
        <title>The transcriptional landscape of the mammalian genome.</title>
        <authorList>
            <person name="Carninci P."/>
            <person name="Kasukawa T."/>
            <person name="Katayama S."/>
            <person name="Gough J."/>
            <person name="Frith M.C."/>
            <person name="Maeda N."/>
            <person name="Oyama R."/>
            <person name="Ravasi T."/>
            <person name="Lenhard B."/>
            <person name="Wells C."/>
            <person name="Kodzius R."/>
            <person name="Shimokawa K."/>
            <person name="Bajic V.B."/>
            <person name="Brenner S.E."/>
            <person name="Batalov S."/>
            <person name="Forrest A.R."/>
            <person name="Zavolan M."/>
            <person name="Davis M.J."/>
            <person name="Wilming L.G."/>
            <person name="Aidinis V."/>
            <person name="Allen J.E."/>
            <person name="Ambesi-Impiombato A."/>
            <person name="Apweiler R."/>
            <person name="Aturaliya R.N."/>
            <person name="Bailey T.L."/>
            <person name="Bansal M."/>
            <person name="Baxter L."/>
            <person name="Beisel K.W."/>
            <person name="Bersano T."/>
            <person name="Bono H."/>
            <person name="Chalk A.M."/>
            <person name="Chiu K.P."/>
            <person name="Choudhary V."/>
            <person name="Christoffels A."/>
            <person name="Clutterbuck D.R."/>
            <person name="Crowe M.L."/>
            <person name="Dalla E."/>
            <person name="Dalrymple B.P."/>
            <person name="de Bono B."/>
            <person name="Della Gatta G."/>
            <person name="di Bernardo D."/>
            <person name="Down T."/>
            <person name="Engstrom P."/>
            <person name="Fagiolini M."/>
            <person name="Faulkner G."/>
            <person name="Fletcher C.F."/>
            <person name="Fukushima T."/>
            <person name="Furuno M."/>
            <person name="Futaki S."/>
            <person name="Gariboldi M."/>
            <person name="Georgii-Hemming P."/>
            <person name="Gingeras T.R."/>
            <person name="Gojobori T."/>
            <person name="Green R.E."/>
            <person name="Gustincich S."/>
            <person name="Harbers M."/>
            <person name="Hayashi Y."/>
            <person name="Hensch T.K."/>
            <person name="Hirokawa N."/>
            <person name="Hill D."/>
            <person name="Huminiecki L."/>
            <person name="Iacono M."/>
            <person name="Ikeo K."/>
            <person name="Iwama A."/>
            <person name="Ishikawa T."/>
            <person name="Jakt M."/>
            <person name="Kanapin A."/>
            <person name="Katoh M."/>
            <person name="Kawasawa Y."/>
            <person name="Kelso J."/>
            <person name="Kitamura H."/>
            <person name="Kitano H."/>
            <person name="Kollias G."/>
            <person name="Krishnan S.P."/>
            <person name="Kruger A."/>
            <person name="Kummerfeld S.K."/>
            <person name="Kurochkin I.V."/>
            <person name="Lareau L.F."/>
            <person name="Lazarevic D."/>
            <person name="Lipovich L."/>
            <person name="Liu J."/>
            <person name="Liuni S."/>
            <person name="McWilliam S."/>
            <person name="Madan Babu M."/>
            <person name="Madera M."/>
            <person name="Marchionni L."/>
            <person name="Matsuda H."/>
            <person name="Matsuzawa S."/>
            <person name="Miki H."/>
            <person name="Mignone F."/>
            <person name="Miyake S."/>
            <person name="Morris K."/>
            <person name="Mottagui-Tabar S."/>
            <person name="Mulder N."/>
            <person name="Nakano N."/>
            <person name="Nakauchi H."/>
            <person name="Ng P."/>
            <person name="Nilsson R."/>
            <person name="Nishiguchi S."/>
            <person name="Nishikawa S."/>
            <person name="Nori F."/>
            <person name="Ohara O."/>
            <person name="Okazaki Y."/>
            <person name="Orlando V."/>
            <person name="Pang K.C."/>
            <person name="Pavan W.J."/>
            <person name="Pavesi G."/>
            <person name="Pesole G."/>
            <person name="Petrovsky N."/>
            <person name="Piazza S."/>
            <person name="Reed J."/>
            <person name="Reid J.F."/>
            <person name="Ring B.Z."/>
            <person name="Ringwald M."/>
            <person name="Rost B."/>
            <person name="Ruan Y."/>
            <person name="Salzberg S.L."/>
            <person name="Sandelin A."/>
            <person name="Schneider C."/>
            <person name="Schoenbach C."/>
            <person name="Sekiguchi K."/>
            <person name="Semple C.A."/>
            <person name="Seno S."/>
            <person name="Sessa L."/>
            <person name="Sheng Y."/>
            <person name="Shibata Y."/>
            <person name="Shimada H."/>
            <person name="Shimada K."/>
            <person name="Silva D."/>
            <person name="Sinclair B."/>
            <person name="Sperling S."/>
            <person name="Stupka E."/>
            <person name="Sugiura K."/>
            <person name="Sultana R."/>
            <person name="Takenaka Y."/>
            <person name="Taki K."/>
            <person name="Tammoja K."/>
            <person name="Tan S.L."/>
            <person name="Tang S."/>
            <person name="Taylor M.S."/>
            <person name="Tegner J."/>
            <person name="Teichmann S.A."/>
            <person name="Ueda H.R."/>
            <person name="van Nimwegen E."/>
            <person name="Verardo R."/>
            <person name="Wei C.L."/>
            <person name="Yagi K."/>
            <person name="Yamanishi H."/>
            <person name="Zabarovsky E."/>
            <person name="Zhu S."/>
            <person name="Zimmer A."/>
            <person name="Hide W."/>
            <person name="Bult C."/>
            <person name="Grimmond S.M."/>
            <person name="Teasdale R.D."/>
            <person name="Liu E.T."/>
            <person name="Brusic V."/>
            <person name="Quackenbush J."/>
            <person name="Wahlestedt C."/>
            <person name="Mattick J.S."/>
            <person name="Hume D.A."/>
            <person name="Kai C."/>
            <person name="Sasaki D."/>
            <person name="Tomaru Y."/>
            <person name="Fukuda S."/>
            <person name="Kanamori-Katayama M."/>
            <person name="Suzuki M."/>
            <person name="Aoki J."/>
            <person name="Arakawa T."/>
            <person name="Iida J."/>
            <person name="Imamura K."/>
            <person name="Itoh M."/>
            <person name="Kato T."/>
            <person name="Kawaji H."/>
            <person name="Kawagashira N."/>
            <person name="Kawashima T."/>
            <person name="Kojima M."/>
            <person name="Kondo S."/>
            <person name="Konno H."/>
            <person name="Nakano K."/>
            <person name="Ninomiya N."/>
            <person name="Nishio T."/>
            <person name="Okada M."/>
            <person name="Plessy C."/>
            <person name="Shibata K."/>
            <person name="Shiraki T."/>
            <person name="Suzuki S."/>
            <person name="Tagami M."/>
            <person name="Waki K."/>
            <person name="Watahiki A."/>
            <person name="Okamura-Oho Y."/>
            <person name="Suzuki H."/>
            <person name="Kawai J."/>
            <person name="Hayashizaki Y."/>
        </authorList>
    </citation>
    <scope>NUCLEOTIDE SEQUENCE [LARGE SCALE MRNA] OF 1-312</scope>
    <source>
        <strain>C57BL/6J</strain>
        <tissue>Embryo</tissue>
    </source>
</reference>
<reference key="4">
    <citation type="journal article" date="2009" name="J. Cell Biol.">
        <title>GNL3L stabilizes the TRF1 complex and promotes mitotic transition.</title>
        <authorList>
            <person name="Zhu Q."/>
            <person name="Meng L."/>
            <person name="Hsu J.K."/>
            <person name="Lin T."/>
            <person name="Teishima J."/>
            <person name="Tsai R.Y."/>
        </authorList>
    </citation>
    <scope>INTERACTION WITH GNL3L AND TIN2</scope>
</reference>
<reference key="5">
    <citation type="journal article" date="2010" name="Cell">
        <title>A tissue-specific atlas of mouse protein phosphorylation and expression.</title>
        <authorList>
            <person name="Huttlin E.L."/>
            <person name="Jedrychowski M.P."/>
            <person name="Elias J.E."/>
            <person name="Goswami T."/>
            <person name="Rad R."/>
            <person name="Beausoleil S.A."/>
            <person name="Villen J."/>
            <person name="Haas W."/>
            <person name="Sowa M.E."/>
            <person name="Gygi S.P."/>
        </authorList>
    </citation>
    <scope>IDENTIFICATION BY MASS SPECTROMETRY [LARGE SCALE ANALYSIS]</scope>
    <source>
        <tissue>Testis</tissue>
    </source>
</reference>
<reference key="6">
    <citation type="journal article" date="2014" name="Nat. Cell Biol.">
        <title>The TRF1-binding protein TERB1 promotes chromosome movement and telomere rigidity in meiosis.</title>
        <authorList>
            <person name="Shibuya H."/>
            <person name="Ishiguro K.I."/>
            <person name="Watanabe Y."/>
        </authorList>
    </citation>
    <scope>FUNCTION</scope>
    <scope>INTERACTION WITH CCDC79</scope>
</reference>
<comment type="function">
    <text evidence="7">Binds the telomeric double-stranded 5'-TTAGGG-3' repeat and negatively regulates telomere length. Involved in the regulation of the mitotic spindle. Component of the shelterin complex (telosome) that is involved in the regulation of telomere length and protection. Shelterin associates with arrays of double-stranded 5'-TTAGGG-3' repeats added by telomerase and protects chromosome ends; without its protective activity, telomeres are no longer hidden from the DNA damage surveillance and chromosome ends are inappropriately processed by DNA repair pathways.</text>
</comment>
<comment type="subunit">
    <text evidence="1 6 7">Homodimer; can contain both isoforms. Found in a complex with POT1; TINF2 and TNKS1. Interacts with ATM, TINF2, TNKS1, TNKS2, PINX1, NEK2 and MAPRE1. Component of the shelterin complex (telosome) composed of TERF1, TERF2, TINF2, TERF2IP ACD and POT1. Interacts with RLIM (via N-terminus). Interacts with FBXO4. Interaction with TINF2 protects against interaction with FBXO4 and subsequent polyubiquitination and proteasomal degradation (By similarity). Interacts with GNL3L; this interaction promotes homodimerization. Interacts with TIN2. Interactions with GNL3L and TIN2 are mutually exclusive. Interacts with RTEL1 (By similarity). Interacts with CCDC79/TERB1.</text>
</comment>
<comment type="interaction">
    <interactant intactId="EBI-6919183">
        <id>P70371</id>
    </interactant>
    <interactant intactId="EBI-6919222">
        <id>Q6ZQJ5</id>
        <label>Dna2</label>
    </interactant>
    <organismsDiffer>false</organismsDiffer>
    <experiments>4</experiments>
</comment>
<comment type="interaction">
    <interactant intactId="EBI-6919183">
        <id>P70371</id>
    </interactant>
    <interactant intactId="EBI-16089839">
        <id>Q8C0V1-1</id>
        <label>Terb1</label>
    </interactant>
    <organismsDiffer>false</organismsDiffer>
    <experiments>4</experiments>
</comment>
<comment type="subcellular location">
    <subcellularLocation>
        <location evidence="4">Nucleus</location>
    </subcellularLocation>
    <subcellularLocation>
        <location evidence="2">Chromosome</location>
        <location evidence="2">Telomere</location>
    </subcellularLocation>
    <subcellularLocation>
        <location evidence="2">Cytoplasm</location>
        <location evidence="2">Cytoskeleton</location>
        <location evidence="2">Spindle</location>
    </subcellularLocation>
    <text evidence="1 2">Colocalizes with telomeric DNA in interphase and prophase cells. Telomeric localization decreases in metaphase, anaphase and telophase. Associates with the mitotic spindle (By similarity). Interacts with TRIOBP isoform 1; mediates TERF1 localization to the centrosome (By similarity).</text>
</comment>
<comment type="domain">
    <text evidence="2">The acidic N-terminal domain binds to the ankyrin repeats of TNKS1 and TNKS2. The C-terminal domain binds microtubules (By similarity).</text>
</comment>
<comment type="domain">
    <text evidence="2">The TRFH dimerization region mediates the interaction with TINF2.</text>
</comment>
<comment type="domain">
    <text evidence="2">The HTH domain is an independent structural unit and mediates binding to telomeric DNA.</text>
</comment>
<comment type="PTM">
    <text evidence="2">Phosphorylated preferentially on Ser-219 in an ATM-dependent manner in response to ionizing DNA damage.</text>
</comment>
<comment type="PTM">
    <text evidence="2">ADP-ribosylation by TNKS1 or TNKS2 diminishes its ability to bind to telomeric DNA.</text>
</comment>
<comment type="PTM">
    <text evidence="2">Ubiquitinated by RLIM/RNF12, leading to its degradation by the proteasome. Ubiquitinated by a SCF (SKP1-CUL1-F-box protein) ubiquitin-protein ligase complex, leading to its degradation by the proteasome (By similarity).</text>
</comment>
<protein>
    <recommendedName>
        <fullName>Telomeric repeat-binding factor 1</fullName>
    </recommendedName>
    <alternativeName>
        <fullName>TTAGGG repeat-binding factor 1</fullName>
    </alternativeName>
</protein>
<feature type="initiator methionine" description="Removed" evidence="2">
    <location>
        <position position="1"/>
    </location>
</feature>
<feature type="chain" id="PRO_0000197130" description="Telomeric repeat-binding factor 1">
    <location>
        <begin position="2"/>
        <end position="421"/>
    </location>
</feature>
<feature type="domain" description="HTH myb-type" evidence="4">
    <location>
        <begin position="362"/>
        <end position="419"/>
    </location>
</feature>
<feature type="DNA-binding region" description="H-T-H motif" evidence="4">
    <location>
        <begin position="390"/>
        <end position="415"/>
    </location>
</feature>
<feature type="region of interest" description="Disordered" evidence="5">
    <location>
        <begin position="1"/>
        <end position="30"/>
    </location>
</feature>
<feature type="region of interest" description="TRFH mediates dimerization" evidence="2">
    <location>
        <begin position="49"/>
        <end position="255"/>
    </location>
</feature>
<feature type="region of interest" description="Interaction with RLIM" evidence="2">
    <location>
        <begin position="252"/>
        <end position="365"/>
    </location>
</feature>
<feature type="region of interest" description="Disordered" evidence="5">
    <location>
        <begin position="253"/>
        <end position="366"/>
    </location>
</feature>
<feature type="short sequence motif" description="Nuclear localization signal" evidence="3">
    <location>
        <begin position="313"/>
        <end position="367"/>
    </location>
</feature>
<feature type="compositionally biased region" description="Basic and acidic residues" evidence="5">
    <location>
        <begin position="253"/>
        <end position="266"/>
    </location>
</feature>
<feature type="compositionally biased region" description="Polar residues" evidence="5">
    <location>
        <begin position="284"/>
        <end position="310"/>
    </location>
</feature>
<feature type="modified residue" description="N-acetylalanine" evidence="2">
    <location>
        <position position="2"/>
    </location>
</feature>
<feature type="modified residue" description="Phosphoserine; by ATM" evidence="2">
    <location>
        <position position="206"/>
    </location>
</feature>
<feature type="cross-link" description="Glycyl lysine isopeptide (Lys-Gly) (interchain with G-Cter in SUMO2)" evidence="2">
    <location>
        <position position="200"/>
    </location>
</feature>
<feature type="sequence conflict" description="In Ref. 3." evidence="8" ref="3">
    <original>SVNGQQSTETEPLVDTVSSIRSHKNALSQL</original>
    <variation>RSFAPSLPYGSTSCDYHIRKQTGIYGIIIQ</variation>
    <location>
        <begin position="283"/>
        <end position="312"/>
    </location>
</feature>
<gene>
    <name type="primary">Terf1</name>
    <name type="synonym">Trf1</name>
</gene>
<keyword id="KW-0007">Acetylation</keyword>
<keyword id="KW-0013">ADP-ribosylation</keyword>
<keyword id="KW-0131">Cell cycle</keyword>
<keyword id="KW-0132">Cell division</keyword>
<keyword id="KW-0158">Chromosome</keyword>
<keyword id="KW-0963">Cytoplasm</keyword>
<keyword id="KW-0206">Cytoskeleton</keyword>
<keyword id="KW-0238">DNA-binding</keyword>
<keyword id="KW-1017">Isopeptide bond</keyword>
<keyword id="KW-0498">Mitosis</keyword>
<keyword id="KW-0539">Nucleus</keyword>
<keyword id="KW-0597">Phosphoprotein</keyword>
<keyword id="KW-1185">Reference proteome</keyword>
<keyword id="KW-0779">Telomere</keyword>
<keyword id="KW-0832">Ubl conjugation</keyword>
<sequence>MAETVSSAARDAPSREGWTDSDSPEQEEVGDDAELLQCQLQLGTPREMENAELVAEVEAVAAGWMLDFLCLSLCRAFRDGRSEDFRRTRDSAEAIIHGLHRLTAYQLKTVYICQFLTRVASGKALDAQFEVDERITPLESALMIWNSIEKEHDKLHDEIKNLIKIQAVAVCMEIGSFKEAEEVFERIFGDPEFYTPLERKLLKIISQKDVFHSLFQHFSYSCMMEKIQSYVGDVLSEKSSTFLMKAATKVVENEKARTQASKDRPDATNTGMDTEVGLNKEKSVNGQQSTETEPLVDTVSSIRSHKNALSQLKHRRAPSDFSRNEARTGTLQCETTMERNRRTSGRNRLCVSENQPDTDDKSGRRKRQTWLWEEDRILKCGVKKYGEGNWAKILSHYKFNNRTSVMLKDRWRTMKRLKLIS</sequence>
<evidence type="ECO:0000250" key="1"/>
<evidence type="ECO:0000250" key="2">
    <source>
        <dbReference type="UniProtKB" id="P54274"/>
    </source>
</evidence>
<evidence type="ECO:0000255" key="3"/>
<evidence type="ECO:0000255" key="4">
    <source>
        <dbReference type="PROSITE-ProRule" id="PRU00625"/>
    </source>
</evidence>
<evidence type="ECO:0000256" key="5">
    <source>
        <dbReference type="SAM" id="MobiDB-lite"/>
    </source>
</evidence>
<evidence type="ECO:0000269" key="6">
    <source>
    </source>
</evidence>
<evidence type="ECO:0000269" key="7">
    <source>
    </source>
</evidence>
<evidence type="ECO:0000305" key="8"/>
<dbReference type="EMBL" id="U65586">
    <property type="protein sequence ID" value="AAB53970.1"/>
    <property type="molecule type" value="mRNA"/>
</dbReference>
<dbReference type="EMBL" id="BC034866">
    <property type="protein sequence ID" value="AAH34866.1"/>
    <property type="molecule type" value="mRNA"/>
</dbReference>
<dbReference type="EMBL" id="U70994">
    <property type="protein sequence ID" value="AAB17974.1"/>
    <property type="molecule type" value="Genomic_DNA"/>
</dbReference>
<dbReference type="EMBL" id="AK021235">
    <property type="protein sequence ID" value="BAB32340.1"/>
    <property type="molecule type" value="mRNA"/>
</dbReference>
<dbReference type="CCDS" id="CCDS14827.1"/>
<dbReference type="RefSeq" id="NP_033378.1">
    <property type="nucleotide sequence ID" value="NM_009352.4"/>
</dbReference>
<dbReference type="SMR" id="P70371"/>
<dbReference type="BioGRID" id="204116">
    <property type="interactions" value="12"/>
</dbReference>
<dbReference type="ComplexPortal" id="CPX-153">
    <property type="entry name" value="Shelterin complex"/>
</dbReference>
<dbReference type="DIP" id="DIP-44231N"/>
<dbReference type="FunCoup" id="P70371">
    <property type="interactions" value="3969"/>
</dbReference>
<dbReference type="IntAct" id="P70371">
    <property type="interactions" value="15"/>
</dbReference>
<dbReference type="MINT" id="P70371"/>
<dbReference type="STRING" id="10090.ENSMUSP00000140744"/>
<dbReference type="iPTMnet" id="P70371"/>
<dbReference type="PhosphoSitePlus" id="P70371"/>
<dbReference type="PaxDb" id="10090-ENSMUSP00000140744"/>
<dbReference type="PeptideAtlas" id="P70371"/>
<dbReference type="ProteomicsDB" id="262975"/>
<dbReference type="Pumba" id="P70371"/>
<dbReference type="Antibodypedia" id="12281">
    <property type="antibodies" value="687 antibodies from 39 providers"/>
</dbReference>
<dbReference type="DNASU" id="21749"/>
<dbReference type="Ensembl" id="ENSMUST00000188371.7">
    <property type="protein sequence ID" value="ENSMUSP00000140744.2"/>
    <property type="gene ID" value="ENSMUSG00000025925.15"/>
</dbReference>
<dbReference type="GeneID" id="21749"/>
<dbReference type="KEGG" id="mmu:21749"/>
<dbReference type="UCSC" id="uc007ajf.2">
    <property type="organism name" value="mouse"/>
</dbReference>
<dbReference type="AGR" id="MGI:109634"/>
<dbReference type="CTD" id="7013"/>
<dbReference type="MGI" id="MGI:109634">
    <property type="gene designation" value="Terf1"/>
</dbReference>
<dbReference type="VEuPathDB" id="HostDB:ENSMUSG00000025925"/>
<dbReference type="eggNOG" id="ENOG502RYK3">
    <property type="taxonomic scope" value="Eukaryota"/>
</dbReference>
<dbReference type="GeneTree" id="ENSGT00940000155268"/>
<dbReference type="HOGENOM" id="CLU_034265_0_0_1"/>
<dbReference type="InParanoid" id="P70371"/>
<dbReference type="OMA" id="HMENRYF"/>
<dbReference type="OrthoDB" id="608866at2759"/>
<dbReference type="PhylomeDB" id="P70371"/>
<dbReference type="TreeFam" id="TF333209"/>
<dbReference type="Reactome" id="R-MMU-110330">
    <property type="pathway name" value="Recognition and association of DNA glycosylase with site containing an affected purine"/>
</dbReference>
<dbReference type="Reactome" id="R-MMU-110331">
    <property type="pathway name" value="Cleavage of the damaged purine"/>
</dbReference>
<dbReference type="Reactome" id="R-MMU-171319">
    <property type="pathway name" value="Telomere Extension By Telomerase"/>
</dbReference>
<dbReference type="Reactome" id="R-MMU-174411">
    <property type="pathway name" value="Polymerase switching on the C-strand of the telomere"/>
</dbReference>
<dbReference type="Reactome" id="R-MMU-174414">
    <property type="pathway name" value="Processive synthesis on the C-strand of the telomere"/>
</dbReference>
<dbReference type="Reactome" id="R-MMU-174417">
    <property type="pathway name" value="Telomere C-strand (Lagging Strand) Synthesis"/>
</dbReference>
<dbReference type="Reactome" id="R-MMU-174430">
    <property type="pathway name" value="Telomere C-strand synthesis initiation"/>
</dbReference>
<dbReference type="Reactome" id="R-MMU-174437">
    <property type="pathway name" value="Removal of the Flap Intermediate from the C-strand"/>
</dbReference>
<dbReference type="Reactome" id="R-MMU-2559586">
    <property type="pathway name" value="DNA Damage/Telomere Stress Induced Senescence"/>
</dbReference>
<dbReference type="Reactome" id="R-MMU-9670095">
    <property type="pathway name" value="Inhibition of DNA recombination at telomere"/>
</dbReference>
<dbReference type="BioGRID-ORCS" id="21749">
    <property type="hits" value="18 hits in 78 CRISPR screens"/>
</dbReference>
<dbReference type="ChiTaRS" id="Terf1">
    <property type="organism name" value="mouse"/>
</dbReference>
<dbReference type="PRO" id="PR:P70371"/>
<dbReference type="Proteomes" id="UP000000589">
    <property type="component" value="Chromosome 1"/>
</dbReference>
<dbReference type="RNAct" id="P70371">
    <property type="molecule type" value="protein"/>
</dbReference>
<dbReference type="Bgee" id="ENSMUSG00000025925">
    <property type="expression patterns" value="Expressed in yolk sac and 251 other cell types or tissues"/>
</dbReference>
<dbReference type="ExpressionAtlas" id="P70371">
    <property type="expression patterns" value="baseline and differential"/>
</dbReference>
<dbReference type="GO" id="GO:0000781">
    <property type="term" value="C:chromosome, telomeric region"/>
    <property type="evidence" value="ECO:0000314"/>
    <property type="project" value="BHF-UCL"/>
</dbReference>
<dbReference type="GO" id="GO:0005737">
    <property type="term" value="C:cytoplasm"/>
    <property type="evidence" value="ECO:0007669"/>
    <property type="project" value="UniProtKB-KW"/>
</dbReference>
<dbReference type="GO" id="GO:0001650">
    <property type="term" value="C:fibrillar center"/>
    <property type="evidence" value="ECO:0007669"/>
    <property type="project" value="Ensembl"/>
</dbReference>
<dbReference type="GO" id="GO:0016604">
    <property type="term" value="C:nuclear body"/>
    <property type="evidence" value="ECO:0007669"/>
    <property type="project" value="Ensembl"/>
</dbReference>
<dbReference type="GO" id="GO:0000783">
    <property type="term" value="C:nuclear telomere cap complex"/>
    <property type="evidence" value="ECO:0000314"/>
    <property type="project" value="BHF-UCL"/>
</dbReference>
<dbReference type="GO" id="GO:0005654">
    <property type="term" value="C:nucleoplasm"/>
    <property type="evidence" value="ECO:0000304"/>
    <property type="project" value="Reactome"/>
</dbReference>
<dbReference type="GO" id="GO:0005634">
    <property type="term" value="C:nucleus"/>
    <property type="evidence" value="ECO:0000314"/>
    <property type="project" value="MGI"/>
</dbReference>
<dbReference type="GO" id="GO:0070187">
    <property type="term" value="C:shelterin complex"/>
    <property type="evidence" value="ECO:0000266"/>
    <property type="project" value="ComplexPortal"/>
</dbReference>
<dbReference type="GO" id="GO:0005819">
    <property type="term" value="C:spindle"/>
    <property type="evidence" value="ECO:0007669"/>
    <property type="project" value="UniProtKB-SubCell"/>
</dbReference>
<dbReference type="GO" id="GO:0071532">
    <property type="term" value="F:ankyrin repeat binding"/>
    <property type="evidence" value="ECO:0007669"/>
    <property type="project" value="Ensembl"/>
</dbReference>
<dbReference type="GO" id="GO:0008301">
    <property type="term" value="F:DNA binding, bending"/>
    <property type="evidence" value="ECO:0007669"/>
    <property type="project" value="Ensembl"/>
</dbReference>
<dbReference type="GO" id="GO:0003691">
    <property type="term" value="F:double-stranded telomeric DNA binding"/>
    <property type="evidence" value="ECO:0000250"/>
    <property type="project" value="UniProtKB"/>
</dbReference>
<dbReference type="GO" id="GO:0098505">
    <property type="term" value="F:G-rich strand telomeric DNA binding"/>
    <property type="evidence" value="ECO:0007669"/>
    <property type="project" value="Ensembl"/>
</dbReference>
<dbReference type="GO" id="GO:0042803">
    <property type="term" value="F:protein homodimerization activity"/>
    <property type="evidence" value="ECO:0007669"/>
    <property type="project" value="Ensembl"/>
</dbReference>
<dbReference type="GO" id="GO:0003720">
    <property type="term" value="F:telomerase activity"/>
    <property type="evidence" value="ECO:0007669"/>
    <property type="project" value="Ensembl"/>
</dbReference>
<dbReference type="GO" id="GO:0042162">
    <property type="term" value="F:telomeric DNA binding"/>
    <property type="evidence" value="ECO:0000314"/>
    <property type="project" value="BHF-UCL"/>
</dbReference>
<dbReference type="GO" id="GO:0051301">
    <property type="term" value="P:cell division"/>
    <property type="evidence" value="ECO:0007669"/>
    <property type="project" value="UniProtKB-KW"/>
</dbReference>
<dbReference type="GO" id="GO:0045141">
    <property type="term" value="P:meiotic telomere clustering"/>
    <property type="evidence" value="ECO:0000315"/>
    <property type="project" value="MGI"/>
</dbReference>
<dbReference type="GO" id="GO:0008156">
    <property type="term" value="P:negative regulation of DNA replication"/>
    <property type="evidence" value="ECO:0007669"/>
    <property type="project" value="Ensembl"/>
</dbReference>
<dbReference type="GO" id="GO:1904850">
    <property type="term" value="P:negative regulation of establishment of protein localization to telomere"/>
    <property type="evidence" value="ECO:0007669"/>
    <property type="project" value="Ensembl"/>
</dbReference>
<dbReference type="GO" id="GO:1904911">
    <property type="term" value="P:negative regulation of establishment of RNA localization to telomere"/>
    <property type="evidence" value="ECO:0007669"/>
    <property type="project" value="Ensembl"/>
</dbReference>
<dbReference type="GO" id="GO:0032211">
    <property type="term" value="P:negative regulation of telomere maintenance via telomerase"/>
    <property type="evidence" value="ECO:0007669"/>
    <property type="project" value="Ensembl"/>
</dbReference>
<dbReference type="GO" id="GO:1905839">
    <property type="term" value="P:negative regulation of telomeric D-loop disassembly"/>
    <property type="evidence" value="ECO:0007669"/>
    <property type="project" value="Ensembl"/>
</dbReference>
<dbReference type="GO" id="GO:1904792">
    <property type="term" value="P:positive regulation of shelterin complex assembly"/>
    <property type="evidence" value="ECO:0007669"/>
    <property type="project" value="Ensembl"/>
</dbReference>
<dbReference type="GO" id="GO:0032206">
    <property type="term" value="P:positive regulation of telomere maintenance"/>
    <property type="evidence" value="ECO:0000303"/>
    <property type="project" value="ComplexPortal"/>
</dbReference>
<dbReference type="GO" id="GO:0016233">
    <property type="term" value="P:telomere capping"/>
    <property type="evidence" value="ECO:0000266"/>
    <property type="project" value="ComplexPortal"/>
</dbReference>
<dbReference type="GO" id="GO:0007004">
    <property type="term" value="P:telomere maintenance via telomerase"/>
    <property type="evidence" value="ECO:0007669"/>
    <property type="project" value="Ensembl"/>
</dbReference>
<dbReference type="GO" id="GO:0061820">
    <property type="term" value="P:telomeric D-loop disassembly"/>
    <property type="evidence" value="ECO:0007669"/>
    <property type="project" value="Ensembl"/>
</dbReference>
<dbReference type="CDD" id="cd11660">
    <property type="entry name" value="SANT_TRF"/>
    <property type="match status" value="1"/>
</dbReference>
<dbReference type="CDD" id="cd00280">
    <property type="entry name" value="TRFH"/>
    <property type="match status" value="1"/>
</dbReference>
<dbReference type="FunFam" id="1.25.40.210:FF:000001">
    <property type="entry name" value="Telomeric repeat-binding factor"/>
    <property type="match status" value="1"/>
</dbReference>
<dbReference type="FunFam" id="1.10.10.60:FF:000129">
    <property type="entry name" value="Telomeric repeat-binding factor 2"/>
    <property type="match status" value="1"/>
</dbReference>
<dbReference type="Gene3D" id="1.10.10.60">
    <property type="entry name" value="Homeodomain-like"/>
    <property type="match status" value="1"/>
</dbReference>
<dbReference type="Gene3D" id="1.25.40.210">
    <property type="entry name" value="Telomere repeat-binding factor, dimerisation domain"/>
    <property type="match status" value="1"/>
</dbReference>
<dbReference type="InterPro" id="IPR009057">
    <property type="entry name" value="Homeodomain-like_sf"/>
</dbReference>
<dbReference type="InterPro" id="IPR017930">
    <property type="entry name" value="Myb_dom"/>
</dbReference>
<dbReference type="InterPro" id="IPR001005">
    <property type="entry name" value="SANT/Myb"/>
</dbReference>
<dbReference type="InterPro" id="IPR013867">
    <property type="entry name" value="Telomere_rpt-bd_fac_dimer_dom"/>
</dbReference>
<dbReference type="InterPro" id="IPR036507">
    <property type="entry name" value="Telomere_rpt-bd_fac_dimer_sf"/>
</dbReference>
<dbReference type="InterPro" id="IPR017357">
    <property type="entry name" value="TERF1/2"/>
</dbReference>
<dbReference type="InterPro" id="IPR052450">
    <property type="entry name" value="TRBD-Containing_Protein"/>
</dbReference>
<dbReference type="PANTHER" id="PTHR46734:SF1">
    <property type="entry name" value="TELOMERIC REPEAT-BINDING FACTOR 1"/>
    <property type="match status" value="1"/>
</dbReference>
<dbReference type="PANTHER" id="PTHR46734">
    <property type="entry name" value="TELOMERIC REPEAT-BINDING FACTOR 1 TERF1"/>
    <property type="match status" value="1"/>
</dbReference>
<dbReference type="Pfam" id="PF00249">
    <property type="entry name" value="Myb_DNA-binding"/>
    <property type="match status" value="1"/>
</dbReference>
<dbReference type="Pfam" id="PF08558">
    <property type="entry name" value="TRF"/>
    <property type="match status" value="1"/>
</dbReference>
<dbReference type="PIRSF" id="PIRSF038016">
    <property type="entry name" value="Telomere_bd-1_Pin2"/>
    <property type="match status" value="1"/>
</dbReference>
<dbReference type="SMART" id="SM00717">
    <property type="entry name" value="SANT"/>
    <property type="match status" value="1"/>
</dbReference>
<dbReference type="SUPFAM" id="SSF46689">
    <property type="entry name" value="Homeodomain-like"/>
    <property type="match status" value="1"/>
</dbReference>
<dbReference type="SUPFAM" id="SSF63600">
    <property type="entry name" value="Telomeric repeat binding factor (TRF) dimerisation domain"/>
    <property type="match status" value="1"/>
</dbReference>
<dbReference type="PROSITE" id="PS51294">
    <property type="entry name" value="HTH_MYB"/>
    <property type="match status" value="1"/>
</dbReference>
<name>TERF1_MOUSE</name>